<name>PA_INBSI</name>
<evidence type="ECO:0000255" key="1">
    <source>
        <dbReference type="HAMAP-Rule" id="MF_04063"/>
    </source>
</evidence>
<organismHost>
    <name type="scientific">Homo sapiens</name>
    <name type="common">Human</name>
    <dbReference type="NCBI Taxonomy" id="9606"/>
</organismHost>
<feature type="chain" id="PRO_0000078808" description="Polymerase acidic protein">
    <location>
        <begin position="1"/>
        <end position="725"/>
    </location>
</feature>
<feature type="short sequence motif" description="Nuclear localization signal 1 (NLS1)" evidence="1">
    <location>
        <begin position="125"/>
        <end position="140"/>
    </location>
</feature>
<feature type="short sequence motif" description="Nuclear localization signal 2 (NLS2)" evidence="1">
    <location>
        <begin position="183"/>
        <end position="244"/>
    </location>
</feature>
<feature type="binding site" evidence="1">
    <location>
        <position position="41"/>
    </location>
    <ligand>
        <name>Mn(2+)</name>
        <dbReference type="ChEBI" id="CHEBI:29035"/>
        <label>1</label>
    </ligand>
</feature>
<feature type="binding site" evidence="1">
    <location>
        <position position="81"/>
    </location>
    <ligand>
        <name>Mn(2+)</name>
        <dbReference type="ChEBI" id="CHEBI:29035"/>
        <label>2</label>
    </ligand>
</feature>
<feature type="binding site" evidence="1">
    <location>
        <position position="109"/>
    </location>
    <ligand>
        <name>Mn(2+)</name>
        <dbReference type="ChEBI" id="CHEBI:29035"/>
        <label>1</label>
    </ligand>
</feature>
<feature type="binding site" evidence="1">
    <location>
        <position position="109"/>
    </location>
    <ligand>
        <name>Mn(2+)</name>
        <dbReference type="ChEBI" id="CHEBI:29035"/>
        <label>2</label>
    </ligand>
</feature>
<feature type="binding site" evidence="1">
    <location>
        <position position="120"/>
    </location>
    <ligand>
        <name>Mn(2+)</name>
        <dbReference type="ChEBI" id="CHEBI:29035"/>
        <label>1</label>
    </ligand>
</feature>
<feature type="binding site" evidence="1">
    <location>
        <position position="121"/>
    </location>
    <ligand>
        <name>Mn(2+)</name>
        <dbReference type="ChEBI" id="CHEBI:29035"/>
        <label>1</label>
    </ligand>
</feature>
<comment type="function">
    <text evidence="1">Plays an essential role in viral RNA transcription and replication by forming the heterotrimeric polymerase complex together with PB1 and PB2 subunits. The complex transcribes viral mRNAs by using a unique mechanism called cap-snatching. It consists in the hijacking and cleavage of host capped pre-mRNAs. These short capped RNAs are then used as primers for viral mRNAs. The PB2 subunit is responsible for the binding of the 5' cap of cellular pre-mRNAs which are subsequently cleaved after 10-13 nucleotides by the PA subunit that carries the endonuclease activity.</text>
</comment>
<comment type="cofactor">
    <cofactor evidence="1">
        <name>Mn(2+)</name>
        <dbReference type="ChEBI" id="CHEBI:29035"/>
    </cofactor>
    <text evidence="1">Binds 2 manganese ions per subunit.</text>
</comment>
<comment type="subunit">
    <text evidence="1">Influenza RNA polymerase is composed of three subunits: PB1, PB2 and PA. Interacts (via C-terminus) with PB1 (via N-terminus).</text>
</comment>
<comment type="subcellular location">
    <subcellularLocation>
        <location evidence="1">Host cytoplasm</location>
    </subcellularLocation>
    <subcellularLocation>
        <location evidence="1">Host nucleus</location>
    </subcellularLocation>
    <text evidence="1">PB1 and PA are transported in the host nucleus as a complex.</text>
</comment>
<comment type="alternative products">
    <event type="ribosomal frameshifting"/>
    <isoform>
        <id>P11136-1</id>
        <name>PA</name>
        <sequence type="displayed"/>
    </isoform>
    <isoform>
        <id>P11136-2</id>
        <name>PA-X</name>
        <sequence type="not described"/>
    </isoform>
</comment>
<comment type="PTM">
    <text evidence="1">Phosphorylated on serines and threonines by host kinases, including human casein kinase II.</text>
</comment>
<comment type="similarity">
    <text evidence="1">Belongs to the influenza viruses PA family.</text>
</comment>
<accession>P11136</accession>
<sequence>MDTFITRNFQTTIIQKAKNTMAEFMEDPELQPAMLFNICVHLEVCYVISDMNFLDEEGKAYTALEGQGKEQNLRPQYEVIEGMPRNIAWMVQRSLAQEHGIETPKYLADLFDYKTKRFIEVGITKGLADDYFWKKKEKLGNSMELMIFSYNQDYSLSNESSLDEEGKGRVLSRLTELQAELSLKNLWQVLIGEEDIEKGIDFKLGQTISRLRDISVPAGFSNFEGMRSYIDNIDPKGAIERNLARMSPLVSVTPKKLKWEDLRPIGPHIYNHELPEVPYNAFLLMSDELGLANMTEGKSKKPKTLAKECLEKYSTLRDQTDPILIMKSEKANENFLWKLWRDCVNTISNEETSNELQKTNYAKWATGDGLTYQKIMKEVAIDDETMCQEEPKIPNKCRVAAWVQTEMNLLSTLTSKRALDLPEIGPDVAPVEHVGSERRKYFVNEINYCKASTVMMKYVLFHTSLLNESNASMGKYKVIPITNRVNEKGESFDMLYGLAVKGQSHLRGDTDVVTVVTFEFSSTDPRVDSGKWPKYTVFRIGSLFVSGREKSVYLYCRVNGTNKIQMKWGMEARRCLLQSMQQMEAIVEQESSIQGYDMTKACFKEDRVNSPKTFSIGTQEGKLVKGSFGKALRVIFTKCLMHYVFGNAQLEGFSAESRRLLLLIQALKDRKGPWVFDLEGMYSGIEECISNNPWVIQSAYWFNEWLGFEKEGSKVLESVDEIMDE</sequence>
<proteinExistence type="evidence at transcript level"/>
<reference key="1">
    <citation type="journal article" date="1987" name="Virology">
        <title>Primary structure of the polymerase acidic (PA) gene of an influenza B virus (B/Sing/222/79).</title>
        <authorList>
            <person name="Akoto-Amanfu E."/>
            <person name="Sivasubramanian N."/>
            <person name="Nayak D.P."/>
        </authorList>
    </citation>
    <scope>NUCLEOTIDE SEQUENCE [MRNA]</scope>
</reference>
<protein>
    <recommendedName>
        <fullName evidence="1">Polymerase acidic protein</fullName>
        <ecNumber evidence="1">3.1.-.-</ecNumber>
    </recommendedName>
    <alternativeName>
        <fullName evidence="1">RNA-directed RNA polymerase subunit P2</fullName>
    </alternativeName>
</protein>
<organism>
    <name type="scientific">Influenza B virus (strain B/Singapore/222/1979)</name>
    <dbReference type="NCBI Taxonomy" id="107417"/>
    <lineage>
        <taxon>Viruses</taxon>
        <taxon>Riboviria</taxon>
        <taxon>Orthornavirae</taxon>
        <taxon>Negarnaviricota</taxon>
        <taxon>Polyploviricotina</taxon>
        <taxon>Insthoviricetes</taxon>
        <taxon>Articulavirales</taxon>
        <taxon>Orthomyxoviridae</taxon>
        <taxon>Betainfluenzavirus</taxon>
        <taxon>Betainfluenzavirus influenzae</taxon>
        <taxon>Influenza B virus</taxon>
    </lineage>
</organism>
<dbReference type="EC" id="3.1.-.-" evidence="1"/>
<dbReference type="EMBL" id="M16711">
    <property type="protein sequence ID" value="AAA43776.1"/>
    <property type="molecule type" value="mRNA"/>
</dbReference>
<dbReference type="PIR" id="A27814">
    <property type="entry name" value="P2IVBS"/>
</dbReference>
<dbReference type="SMR" id="P11136"/>
<dbReference type="IntAct" id="P11136">
    <property type="interactions" value="1"/>
</dbReference>
<dbReference type="Proteomes" id="UP000137758">
    <property type="component" value="Genome"/>
</dbReference>
<dbReference type="GO" id="GO:0030430">
    <property type="term" value="C:host cell cytoplasm"/>
    <property type="evidence" value="ECO:0007669"/>
    <property type="project" value="UniProtKB-SubCell"/>
</dbReference>
<dbReference type="GO" id="GO:0042025">
    <property type="term" value="C:host cell nucleus"/>
    <property type="evidence" value="ECO:0007669"/>
    <property type="project" value="UniProtKB-SubCell"/>
</dbReference>
<dbReference type="GO" id="GO:0004519">
    <property type="term" value="F:endonuclease activity"/>
    <property type="evidence" value="ECO:0007669"/>
    <property type="project" value="UniProtKB-KW"/>
</dbReference>
<dbReference type="GO" id="GO:0046872">
    <property type="term" value="F:metal ion binding"/>
    <property type="evidence" value="ECO:0007669"/>
    <property type="project" value="UniProtKB-KW"/>
</dbReference>
<dbReference type="GO" id="GO:0003723">
    <property type="term" value="F:RNA binding"/>
    <property type="evidence" value="ECO:0007669"/>
    <property type="project" value="UniProtKB-UniRule"/>
</dbReference>
<dbReference type="GO" id="GO:0075526">
    <property type="term" value="P:cap snatching"/>
    <property type="evidence" value="ECO:0007669"/>
    <property type="project" value="UniProtKB-UniRule"/>
</dbReference>
<dbReference type="GO" id="GO:0006351">
    <property type="term" value="P:DNA-templated transcription"/>
    <property type="evidence" value="ECO:0007669"/>
    <property type="project" value="UniProtKB-UniRule"/>
</dbReference>
<dbReference type="GO" id="GO:0039657">
    <property type="term" value="P:symbiont-mediated suppression of host gene expression"/>
    <property type="evidence" value="ECO:0007669"/>
    <property type="project" value="UniProtKB-KW"/>
</dbReference>
<dbReference type="GO" id="GO:0039523">
    <property type="term" value="P:symbiont-mediated suppression of host mRNA transcription via inhibition of RNA polymerase II activity"/>
    <property type="evidence" value="ECO:0007669"/>
    <property type="project" value="UniProtKB-UniRule"/>
</dbReference>
<dbReference type="GO" id="GO:0039694">
    <property type="term" value="P:viral RNA genome replication"/>
    <property type="evidence" value="ECO:0007669"/>
    <property type="project" value="InterPro"/>
</dbReference>
<dbReference type="GO" id="GO:0075523">
    <property type="term" value="P:viral translational frameshifting"/>
    <property type="evidence" value="ECO:0007669"/>
    <property type="project" value="UniProtKB-KW"/>
</dbReference>
<dbReference type="Gene3D" id="3.40.91.90">
    <property type="entry name" value="Influenza RNA-dependent RNA polymerase subunit PA, endonuclease domain"/>
    <property type="match status" value="1"/>
</dbReference>
<dbReference type="HAMAP" id="MF_04063">
    <property type="entry name" value="INFV_PA"/>
    <property type="match status" value="1"/>
</dbReference>
<dbReference type="InterPro" id="IPR037534">
    <property type="entry name" value="INFV_PA"/>
</dbReference>
<dbReference type="InterPro" id="IPR001009">
    <property type="entry name" value="PA/PA-X"/>
</dbReference>
<dbReference type="InterPro" id="IPR038372">
    <property type="entry name" value="PA/PA-X_sf"/>
</dbReference>
<dbReference type="Pfam" id="PF00603">
    <property type="entry name" value="Flu_PA"/>
    <property type="match status" value="1"/>
</dbReference>
<gene>
    <name evidence="1" type="primary">PA</name>
</gene>
<keyword id="KW-1157">Cap snatching</keyword>
<keyword id="KW-0255">Endonuclease</keyword>
<keyword id="KW-1262">Eukaryotic host gene expression shutoff by virus</keyword>
<keyword id="KW-1191">Eukaryotic host transcription shutoff by virus</keyword>
<keyword id="KW-1035">Host cytoplasm</keyword>
<keyword id="KW-1190">Host gene expression shutoff by virus</keyword>
<keyword id="KW-1048">Host nucleus</keyword>
<keyword id="KW-0945">Host-virus interaction</keyword>
<keyword id="KW-0378">Hydrolase</keyword>
<keyword id="KW-1104">Inhibition of host RNA polymerase II by virus</keyword>
<keyword id="KW-0464">Manganese</keyword>
<keyword id="KW-0479">Metal-binding</keyword>
<keyword id="KW-0540">Nuclease</keyword>
<keyword id="KW-0597">Phosphoprotein</keyword>
<keyword id="KW-0688">Ribosomal frameshifting</keyword>